<organism>
    <name type="scientific">Agathobacter rectalis (strain ATCC 33656 / DSM 3377 / JCM 17463 / KCTC 5835 / VPI 0990)</name>
    <name type="common">Eubacterium rectale</name>
    <dbReference type="NCBI Taxonomy" id="515619"/>
    <lineage>
        <taxon>Bacteria</taxon>
        <taxon>Bacillati</taxon>
        <taxon>Bacillota</taxon>
        <taxon>Clostridia</taxon>
        <taxon>Lachnospirales</taxon>
        <taxon>Lachnospiraceae</taxon>
        <taxon>Agathobacter</taxon>
    </lineage>
</organism>
<accession>C4ZGF3</accession>
<evidence type="ECO:0000255" key="1">
    <source>
        <dbReference type="HAMAP-Rule" id="MF_00303"/>
    </source>
</evidence>
<name>TIG_AGARV</name>
<reference key="1">
    <citation type="journal article" date="2009" name="Proc. Natl. Acad. Sci. U.S.A.">
        <title>Characterizing a model human gut microbiota composed of members of its two dominant bacterial phyla.</title>
        <authorList>
            <person name="Mahowald M.A."/>
            <person name="Rey F.E."/>
            <person name="Seedorf H."/>
            <person name="Turnbaugh P.J."/>
            <person name="Fulton R.S."/>
            <person name="Wollam A."/>
            <person name="Shah N."/>
            <person name="Wang C."/>
            <person name="Magrini V."/>
            <person name="Wilson R.K."/>
            <person name="Cantarel B.L."/>
            <person name="Coutinho P.M."/>
            <person name="Henrissat B."/>
            <person name="Crock L.W."/>
            <person name="Russell A."/>
            <person name="Verberkmoes N.C."/>
            <person name="Hettich R.L."/>
            <person name="Gordon J.I."/>
        </authorList>
    </citation>
    <scope>NUCLEOTIDE SEQUENCE [LARGE SCALE GENOMIC DNA]</scope>
    <source>
        <strain>ATCC 33656 / DSM 3377 / JCM 17463 / KCTC 5835 / LMG 30912 / VPI 0990</strain>
    </source>
</reference>
<keyword id="KW-0131">Cell cycle</keyword>
<keyword id="KW-0132">Cell division</keyword>
<keyword id="KW-0143">Chaperone</keyword>
<keyword id="KW-0963">Cytoplasm</keyword>
<keyword id="KW-0413">Isomerase</keyword>
<keyword id="KW-0697">Rotamase</keyword>
<protein>
    <recommendedName>
        <fullName evidence="1">Trigger factor</fullName>
        <shortName evidence="1">TF</shortName>
        <ecNumber evidence="1">5.2.1.8</ecNumber>
    </recommendedName>
    <alternativeName>
        <fullName evidence="1">PPIase</fullName>
    </alternativeName>
</protein>
<proteinExistence type="inferred from homology"/>
<feature type="chain" id="PRO_1000204988" description="Trigger factor">
    <location>
        <begin position="1"/>
        <end position="443"/>
    </location>
</feature>
<feature type="domain" description="PPIase FKBP-type" evidence="1">
    <location>
        <begin position="163"/>
        <end position="248"/>
    </location>
</feature>
<gene>
    <name evidence="1" type="primary">tig</name>
    <name type="ordered locus">EUBREC_0988</name>
</gene>
<sequence length="443" mass="49302">MSVQVENLEHNMAKLTIEVAAEELEKALDSAYQKQKKQISVPGFRKGKVPRAMIEKMYGAGVFYEDAANILMQQTYAGAVDESGVDIVSRPTVEVTQIEKGQPFIYTAEVAVRPEVTLGKYMGVTVTKIDTSVSDEEVDAELENQRNKNARTVTVTDRPVAEGDTAVIDFEGFVDGVAFEGGKGENHPLEIGSHTFIDTFEDQLVGKNTGDEVEVNVTFPEKYQAEDLAGKPATFKVKINEIKAKELPELDDEFAQDAAGVDTLAEYKEEIKKNLTEKKETEAKKTKEDEAIQKIIDKSKMDLPEAMIETQCETMVEEFAQRIAQSGLTMEQYLQFSGMTVDQLKDQVRPEATTRIQSSLVLEQIAKEENIEVTDADIDAEVEKMAKAYGMEADKLKEYMGDAEKESMKKDIAITKAVDLIMDNVKERAKAKKKADAEESTEE</sequence>
<comment type="function">
    <text evidence="1">Involved in protein export. Acts as a chaperone by maintaining the newly synthesized protein in an open conformation. Functions as a peptidyl-prolyl cis-trans isomerase.</text>
</comment>
<comment type="catalytic activity">
    <reaction evidence="1">
        <text>[protein]-peptidylproline (omega=180) = [protein]-peptidylproline (omega=0)</text>
        <dbReference type="Rhea" id="RHEA:16237"/>
        <dbReference type="Rhea" id="RHEA-COMP:10747"/>
        <dbReference type="Rhea" id="RHEA-COMP:10748"/>
        <dbReference type="ChEBI" id="CHEBI:83833"/>
        <dbReference type="ChEBI" id="CHEBI:83834"/>
        <dbReference type="EC" id="5.2.1.8"/>
    </reaction>
</comment>
<comment type="subcellular location">
    <subcellularLocation>
        <location>Cytoplasm</location>
    </subcellularLocation>
    <text evidence="1">About half TF is bound to the ribosome near the polypeptide exit tunnel while the other half is free in the cytoplasm.</text>
</comment>
<comment type="domain">
    <text evidence="1">Consists of 3 domains; the N-terminus binds the ribosome, the middle domain has PPIase activity, while the C-terminus has intrinsic chaperone activity on its own.</text>
</comment>
<comment type="similarity">
    <text evidence="1">Belongs to the FKBP-type PPIase family. Tig subfamily.</text>
</comment>
<dbReference type="EC" id="5.2.1.8" evidence="1"/>
<dbReference type="EMBL" id="CP001107">
    <property type="protein sequence ID" value="ACR74750.1"/>
    <property type="molecule type" value="Genomic_DNA"/>
</dbReference>
<dbReference type="RefSeq" id="WP_012741851.1">
    <property type="nucleotide sequence ID" value="NC_012781.1"/>
</dbReference>
<dbReference type="SMR" id="C4ZGF3"/>
<dbReference type="STRING" id="515619.EUBREC_0988"/>
<dbReference type="PaxDb" id="515619-EUBREC_0988"/>
<dbReference type="GeneID" id="86987847"/>
<dbReference type="KEGG" id="ere:EUBREC_0988"/>
<dbReference type="HOGENOM" id="CLU_033058_3_2_9"/>
<dbReference type="Proteomes" id="UP000001477">
    <property type="component" value="Chromosome"/>
</dbReference>
<dbReference type="GO" id="GO:0005737">
    <property type="term" value="C:cytoplasm"/>
    <property type="evidence" value="ECO:0007669"/>
    <property type="project" value="UniProtKB-SubCell"/>
</dbReference>
<dbReference type="GO" id="GO:0003755">
    <property type="term" value="F:peptidyl-prolyl cis-trans isomerase activity"/>
    <property type="evidence" value="ECO:0007669"/>
    <property type="project" value="UniProtKB-UniRule"/>
</dbReference>
<dbReference type="GO" id="GO:0044183">
    <property type="term" value="F:protein folding chaperone"/>
    <property type="evidence" value="ECO:0007669"/>
    <property type="project" value="TreeGrafter"/>
</dbReference>
<dbReference type="GO" id="GO:0043022">
    <property type="term" value="F:ribosome binding"/>
    <property type="evidence" value="ECO:0007669"/>
    <property type="project" value="TreeGrafter"/>
</dbReference>
<dbReference type="GO" id="GO:0051083">
    <property type="term" value="P:'de novo' cotranslational protein folding"/>
    <property type="evidence" value="ECO:0007669"/>
    <property type="project" value="TreeGrafter"/>
</dbReference>
<dbReference type="GO" id="GO:0051301">
    <property type="term" value="P:cell division"/>
    <property type="evidence" value="ECO:0007669"/>
    <property type="project" value="UniProtKB-KW"/>
</dbReference>
<dbReference type="GO" id="GO:0061077">
    <property type="term" value="P:chaperone-mediated protein folding"/>
    <property type="evidence" value="ECO:0007669"/>
    <property type="project" value="TreeGrafter"/>
</dbReference>
<dbReference type="GO" id="GO:0015031">
    <property type="term" value="P:protein transport"/>
    <property type="evidence" value="ECO:0007669"/>
    <property type="project" value="UniProtKB-UniRule"/>
</dbReference>
<dbReference type="GO" id="GO:0043335">
    <property type="term" value="P:protein unfolding"/>
    <property type="evidence" value="ECO:0007669"/>
    <property type="project" value="TreeGrafter"/>
</dbReference>
<dbReference type="FunFam" id="3.10.50.40:FF:000001">
    <property type="entry name" value="Trigger factor"/>
    <property type="match status" value="1"/>
</dbReference>
<dbReference type="Gene3D" id="3.10.50.40">
    <property type="match status" value="1"/>
</dbReference>
<dbReference type="Gene3D" id="3.30.70.1050">
    <property type="entry name" value="Trigger factor ribosome-binding domain"/>
    <property type="match status" value="1"/>
</dbReference>
<dbReference type="Gene3D" id="1.10.3120.10">
    <property type="entry name" value="Trigger factor, C-terminal domain"/>
    <property type="match status" value="1"/>
</dbReference>
<dbReference type="HAMAP" id="MF_00303">
    <property type="entry name" value="Trigger_factor_Tig"/>
    <property type="match status" value="1"/>
</dbReference>
<dbReference type="InterPro" id="IPR046357">
    <property type="entry name" value="PPIase_dom_sf"/>
</dbReference>
<dbReference type="InterPro" id="IPR001179">
    <property type="entry name" value="PPIase_FKBP_dom"/>
</dbReference>
<dbReference type="InterPro" id="IPR005215">
    <property type="entry name" value="Trig_fac"/>
</dbReference>
<dbReference type="InterPro" id="IPR008880">
    <property type="entry name" value="Trigger_fac_C"/>
</dbReference>
<dbReference type="InterPro" id="IPR037041">
    <property type="entry name" value="Trigger_fac_C_sf"/>
</dbReference>
<dbReference type="InterPro" id="IPR008881">
    <property type="entry name" value="Trigger_fac_ribosome-bd_bac"/>
</dbReference>
<dbReference type="InterPro" id="IPR036611">
    <property type="entry name" value="Trigger_fac_ribosome-bd_sf"/>
</dbReference>
<dbReference type="InterPro" id="IPR027304">
    <property type="entry name" value="Trigger_fact/SurA_dom_sf"/>
</dbReference>
<dbReference type="NCBIfam" id="TIGR00115">
    <property type="entry name" value="tig"/>
    <property type="match status" value="1"/>
</dbReference>
<dbReference type="PANTHER" id="PTHR30560">
    <property type="entry name" value="TRIGGER FACTOR CHAPERONE AND PEPTIDYL-PROLYL CIS/TRANS ISOMERASE"/>
    <property type="match status" value="1"/>
</dbReference>
<dbReference type="PANTHER" id="PTHR30560:SF3">
    <property type="entry name" value="TRIGGER FACTOR-LIKE PROTEIN TIG, CHLOROPLASTIC"/>
    <property type="match status" value="1"/>
</dbReference>
<dbReference type="Pfam" id="PF00254">
    <property type="entry name" value="FKBP_C"/>
    <property type="match status" value="1"/>
</dbReference>
<dbReference type="Pfam" id="PF05698">
    <property type="entry name" value="Trigger_C"/>
    <property type="match status" value="1"/>
</dbReference>
<dbReference type="Pfam" id="PF05697">
    <property type="entry name" value="Trigger_N"/>
    <property type="match status" value="1"/>
</dbReference>
<dbReference type="PIRSF" id="PIRSF003095">
    <property type="entry name" value="Trigger_factor"/>
    <property type="match status" value="1"/>
</dbReference>
<dbReference type="SUPFAM" id="SSF54534">
    <property type="entry name" value="FKBP-like"/>
    <property type="match status" value="1"/>
</dbReference>
<dbReference type="SUPFAM" id="SSF109998">
    <property type="entry name" value="Triger factor/SurA peptide-binding domain-like"/>
    <property type="match status" value="1"/>
</dbReference>
<dbReference type="SUPFAM" id="SSF102735">
    <property type="entry name" value="Trigger factor ribosome-binding domain"/>
    <property type="match status" value="1"/>
</dbReference>
<dbReference type="PROSITE" id="PS50059">
    <property type="entry name" value="FKBP_PPIASE"/>
    <property type="match status" value="1"/>
</dbReference>